<comment type="function">
    <text evidence="1">F(1)F(0) ATP synthase produces ATP from ADP in the presence of a proton or sodium gradient. F-type ATPases consist of two structural domains, F(1) containing the extramembraneous catalytic core and F(0) containing the membrane proton channel, linked together by a central stalk and a peripheral stalk. During catalysis, ATP synthesis in the catalytic domain of F(1) is coupled via a rotary mechanism of the central stalk subunits to proton translocation.</text>
</comment>
<comment type="function">
    <text evidence="1">Component of the F(0) channel, it forms part of the peripheral stalk, linking F(1) to F(0).</text>
</comment>
<comment type="subunit">
    <text evidence="1">F-type ATPases have 2 components, F(1) - the catalytic core - and F(0) - the membrane proton channel. F(1) has five subunits: alpha(3), beta(3), gamma(1), delta(1), epsilon(1). F(0) has three main subunits: a(1), b(2) and c(10-14). The alpha and beta chains form an alternating ring which encloses part of the gamma chain. F(1) is attached to F(0) by a central stalk formed by the gamma and epsilon chains, while a peripheral stalk is formed by the delta and b chains.</text>
</comment>
<comment type="subcellular location">
    <subcellularLocation>
        <location evidence="1">Cell membrane</location>
        <topology evidence="1">Single-pass membrane protein</topology>
    </subcellularLocation>
</comment>
<comment type="similarity">
    <text evidence="1">Belongs to the ATPase B chain family.</text>
</comment>
<reference key="1">
    <citation type="journal article" date="2008" name="Chem. Biol. Interact.">
        <title>Extending the Bacillus cereus group genomics to putative food-borne pathogens of different toxicity.</title>
        <authorList>
            <person name="Lapidus A."/>
            <person name="Goltsman E."/>
            <person name="Auger S."/>
            <person name="Galleron N."/>
            <person name="Segurens B."/>
            <person name="Dossat C."/>
            <person name="Land M.L."/>
            <person name="Broussolle V."/>
            <person name="Brillard J."/>
            <person name="Guinebretiere M.-H."/>
            <person name="Sanchis V."/>
            <person name="Nguen-the C."/>
            <person name="Lereclus D."/>
            <person name="Richardson P."/>
            <person name="Wincker P."/>
            <person name="Weissenbach J."/>
            <person name="Ehrlich S.D."/>
            <person name="Sorokin A."/>
        </authorList>
    </citation>
    <scope>NUCLEOTIDE SEQUENCE [LARGE SCALE GENOMIC DNA]</scope>
    <source>
        <strain>DSM 22905 / CIP 110041 / 391-98 / NVH 391-98</strain>
    </source>
</reference>
<dbReference type="EMBL" id="CP000764">
    <property type="protein sequence ID" value="ABS24018.1"/>
    <property type="molecule type" value="Genomic_DNA"/>
</dbReference>
<dbReference type="RefSeq" id="WP_012096276.1">
    <property type="nucleotide sequence ID" value="NC_009674.1"/>
</dbReference>
<dbReference type="SMR" id="A7GV60"/>
<dbReference type="STRING" id="315749.Bcer98_3829"/>
<dbReference type="GeneID" id="33899070"/>
<dbReference type="KEGG" id="bcy:Bcer98_3829"/>
<dbReference type="eggNOG" id="COG0711">
    <property type="taxonomic scope" value="Bacteria"/>
</dbReference>
<dbReference type="HOGENOM" id="CLU_079215_4_2_9"/>
<dbReference type="OrthoDB" id="282095at2"/>
<dbReference type="Proteomes" id="UP000002300">
    <property type="component" value="Chromosome"/>
</dbReference>
<dbReference type="GO" id="GO:0005886">
    <property type="term" value="C:plasma membrane"/>
    <property type="evidence" value="ECO:0007669"/>
    <property type="project" value="UniProtKB-SubCell"/>
</dbReference>
<dbReference type="GO" id="GO:0045259">
    <property type="term" value="C:proton-transporting ATP synthase complex"/>
    <property type="evidence" value="ECO:0007669"/>
    <property type="project" value="UniProtKB-KW"/>
</dbReference>
<dbReference type="GO" id="GO:0046933">
    <property type="term" value="F:proton-transporting ATP synthase activity, rotational mechanism"/>
    <property type="evidence" value="ECO:0007669"/>
    <property type="project" value="UniProtKB-UniRule"/>
</dbReference>
<dbReference type="GO" id="GO:0046961">
    <property type="term" value="F:proton-transporting ATPase activity, rotational mechanism"/>
    <property type="evidence" value="ECO:0007669"/>
    <property type="project" value="TreeGrafter"/>
</dbReference>
<dbReference type="CDD" id="cd06503">
    <property type="entry name" value="ATP-synt_Fo_b"/>
    <property type="match status" value="1"/>
</dbReference>
<dbReference type="Gene3D" id="6.10.250.1580">
    <property type="match status" value="1"/>
</dbReference>
<dbReference type="HAMAP" id="MF_01398">
    <property type="entry name" value="ATP_synth_b_bprime"/>
    <property type="match status" value="1"/>
</dbReference>
<dbReference type="InterPro" id="IPR028987">
    <property type="entry name" value="ATP_synth_B-like_membr_sf"/>
</dbReference>
<dbReference type="InterPro" id="IPR002146">
    <property type="entry name" value="ATP_synth_b/b'su_bac/chlpt"/>
</dbReference>
<dbReference type="InterPro" id="IPR005864">
    <property type="entry name" value="ATP_synth_F0_bsu_bac"/>
</dbReference>
<dbReference type="InterPro" id="IPR050059">
    <property type="entry name" value="ATP_synthase_B_chain"/>
</dbReference>
<dbReference type="NCBIfam" id="TIGR01144">
    <property type="entry name" value="ATP_synt_b"/>
    <property type="match status" value="1"/>
</dbReference>
<dbReference type="PANTHER" id="PTHR33445:SF1">
    <property type="entry name" value="ATP SYNTHASE SUBUNIT B"/>
    <property type="match status" value="1"/>
</dbReference>
<dbReference type="PANTHER" id="PTHR33445">
    <property type="entry name" value="ATP SYNTHASE SUBUNIT B', CHLOROPLASTIC"/>
    <property type="match status" value="1"/>
</dbReference>
<dbReference type="Pfam" id="PF00430">
    <property type="entry name" value="ATP-synt_B"/>
    <property type="match status" value="1"/>
</dbReference>
<dbReference type="SUPFAM" id="SSF81573">
    <property type="entry name" value="F1F0 ATP synthase subunit B, membrane domain"/>
    <property type="match status" value="1"/>
</dbReference>
<name>ATPF_BACCN</name>
<sequence>MPTLLLGAAIPFGTIAYTLVVFLILLVMLRKFAWGPLMGIMKEREEHVASEIDAAEKNHAEAKKLVEEQREMLKQSRVEAQELIERAKKQAEEQKDGIIAAAKEEAESIKTSAVQEIQREKEQAIATLQEQVASLSVQIASKVIEKELKEEDQVKLIRDYIKEVGEAR</sequence>
<protein>
    <recommendedName>
        <fullName evidence="1">ATP synthase subunit b</fullName>
    </recommendedName>
    <alternativeName>
        <fullName evidence="1">ATP synthase F(0) sector subunit b</fullName>
    </alternativeName>
    <alternativeName>
        <fullName evidence="1">ATPase subunit I</fullName>
    </alternativeName>
    <alternativeName>
        <fullName evidence="1">F-type ATPase subunit b</fullName>
        <shortName evidence="1">F-ATPase subunit b</shortName>
    </alternativeName>
</protein>
<keyword id="KW-0066">ATP synthesis</keyword>
<keyword id="KW-1003">Cell membrane</keyword>
<keyword id="KW-0138">CF(0)</keyword>
<keyword id="KW-0375">Hydrogen ion transport</keyword>
<keyword id="KW-0406">Ion transport</keyword>
<keyword id="KW-0472">Membrane</keyword>
<keyword id="KW-0812">Transmembrane</keyword>
<keyword id="KW-1133">Transmembrane helix</keyword>
<keyword id="KW-0813">Transport</keyword>
<evidence type="ECO:0000255" key="1">
    <source>
        <dbReference type="HAMAP-Rule" id="MF_01398"/>
    </source>
</evidence>
<gene>
    <name evidence="1" type="primary">atpF</name>
    <name type="ordered locus">Bcer98_3829</name>
</gene>
<accession>A7GV60</accession>
<feature type="chain" id="PRO_0000368330" description="ATP synthase subunit b">
    <location>
        <begin position="1"/>
        <end position="168"/>
    </location>
</feature>
<feature type="transmembrane region" description="Helical" evidence="1">
    <location>
        <begin position="9"/>
        <end position="29"/>
    </location>
</feature>
<organism>
    <name type="scientific">Bacillus cytotoxicus (strain DSM 22905 / CIP 110041 / 391-98 / NVH 391-98)</name>
    <dbReference type="NCBI Taxonomy" id="315749"/>
    <lineage>
        <taxon>Bacteria</taxon>
        <taxon>Bacillati</taxon>
        <taxon>Bacillota</taxon>
        <taxon>Bacilli</taxon>
        <taxon>Bacillales</taxon>
        <taxon>Bacillaceae</taxon>
        <taxon>Bacillus</taxon>
        <taxon>Bacillus cereus group</taxon>
    </lineage>
</organism>
<proteinExistence type="inferred from homology"/>